<sequence>MACYLVISSRHLSNGHYRGIKGVFRGPLCKNGSPSPDFAEKKSTAKALEDVKANFYCELCDKQYHKHQEFDNHINSYDHAHKQRLKELKQREFARNVASKSWKDEKKQEKALKRLHQLAELRQQSECVSGNGPAYKAPRVAIEKQLQQGIFPIKNGRKVSCMKSALLLKGKNLPRIISDKQRSTMPNRHQLQSDRRCLFGNQVLQTSSDLSNANHRTGVSFTFSKKVHLKLESSASVFSENTEETHDCNKSPIYKTKQTADKCKCCRFANKDTHLTKEKEVNISPSHLESVLHNTISINSKILQDKHDSIDETLEDSIGIHASFSKSNIHLSDVDFTPTSREKETRNTLKNTLENCVNHPCQANASFSPPNIYNHSDARISECLDEFSSLEPSEQKSTVHLNPNSRIENREKSLDKTERVSKNVQRLVKEACTHNVASKPLPFLHVQSKDGHTTLQWPTELLLFTKTEPCISYGCNPLYFDFKLSRNTKEDHNLEDLKTELGKKPLELKTKRESQVSGLTEDQQKLIQEDYQYPKPKTMIANPDWEKFQRKYNLDYSDSEPNKSEYTFSANDLEMKNPKVPLYLNTSLKDCAGKNNSSENKLKEASRAHWQGCRKAVLNDIDEDLSFPSYISRFKKHKLIPCSPHLEFEDERQFNCKSSPCTVGGHSDHGKDFSVILKSNHISMTSKVSGCGNQRYKRYSPQSCLSRYSSSLDTSPSSMSSLRSTCSSHRFNGNSRGNLLCFHKREHHSVERHKRKCLKHNCFYLSDDITKSSQMQSEPQKERNCKLWESFKNEKYSKRRYCHCRERQKLGKNQQQFSGLKSTRIIYCDSNSQISCTGSSKKPPNCQGTQHDRLDSYSIEKMYYLNKSKRNQESLGSPHICDLGKVRPMKCNSGNISCLLKNCSSGPSETTESNTAEGERTPLTAKILLERVQAKKCQEQSSNVEISSNSCKSELEAPSQVPCTIQLAPSGCNRQALPLSEKIQYASESRNDQDSAIPRTTEKDKSKSSHTNNFTILADTDCDNHLSKGIIHLVTESQSLNIKRDATTKEQSKPLISEIQPFIQSCDPVPNEFPGAFPSNKYTGVTDSTETQEDQINLDLQDVSMHINHVEGNINSYYDRTMQKPDKVEDGLEMCHKSISPPLIQQPITFSPDEIDKYKILQLQAQQHMQKQLLSKHLRVLPAAGPTAFSPASTVQTVPVHQHTSITTIHHTFLQHFAVSASLSSHSSHLPIAHLHPLSQAHFSPISFSTLTPTIIPAHPTFLAGHPLHLVAATPFHPSHITLQPLPPTAFIPTLFGPHLNPATTSIIHLNPLIQPVFQGQDFCHHSCSSQMQQLNEVKEALNVSTHLN</sequence>
<evidence type="ECO:0000256" key="1">
    <source>
        <dbReference type="SAM" id="MobiDB-lite"/>
    </source>
</evidence>
<evidence type="ECO:0000269" key="2">
    <source>
    </source>
</evidence>
<evidence type="ECO:0000269" key="3">
    <source>
    </source>
</evidence>
<evidence type="ECO:0000305" key="4"/>
<proteinExistence type="evidence at transcript level"/>
<protein>
    <recommendedName>
        <fullName>Zinc finger protein 804B</fullName>
    </recommendedName>
</protein>
<keyword id="KW-0479">Metal-binding</keyword>
<keyword id="KW-1185">Reference proteome</keyword>
<keyword id="KW-0862">Zinc</keyword>
<keyword id="KW-0863">Zinc-finger</keyword>
<gene>
    <name type="primary">ZNF804B</name>
</gene>
<organism>
    <name type="scientific">Homo sapiens</name>
    <name type="common">Human</name>
    <dbReference type="NCBI Taxonomy" id="9606"/>
    <lineage>
        <taxon>Eukaryota</taxon>
        <taxon>Metazoa</taxon>
        <taxon>Chordata</taxon>
        <taxon>Craniata</taxon>
        <taxon>Vertebrata</taxon>
        <taxon>Euteleostomi</taxon>
        <taxon>Mammalia</taxon>
        <taxon>Eutheria</taxon>
        <taxon>Euarchontoglires</taxon>
        <taxon>Primates</taxon>
        <taxon>Haplorrhini</taxon>
        <taxon>Catarrhini</taxon>
        <taxon>Hominidae</taxon>
        <taxon>Homo</taxon>
    </lineage>
</organism>
<reference key="1">
    <citation type="submission" date="2003-05" db="EMBL/GenBank/DDBJ databases">
        <authorList>
            <person name="Shan Y.X."/>
            <person name="Huang C.Q."/>
            <person name="Yu L."/>
        </authorList>
    </citation>
    <scope>NUCLEOTIDE SEQUENCE [MRNA]</scope>
</reference>
<reference key="2">
    <citation type="journal article" date="2003" name="Nature">
        <title>The DNA sequence of human chromosome 7.</title>
        <authorList>
            <person name="Hillier L.W."/>
            <person name="Fulton R.S."/>
            <person name="Fulton L.A."/>
            <person name="Graves T.A."/>
            <person name="Pepin K.H."/>
            <person name="Wagner-McPherson C."/>
            <person name="Layman D."/>
            <person name="Maas J."/>
            <person name="Jaeger S."/>
            <person name="Walker R."/>
            <person name="Wylie K."/>
            <person name="Sekhon M."/>
            <person name="Becker M.C."/>
            <person name="O'Laughlin M.D."/>
            <person name="Schaller M.E."/>
            <person name="Fewell G.A."/>
            <person name="Delehaunty K.D."/>
            <person name="Miner T.L."/>
            <person name="Nash W.E."/>
            <person name="Cordes M."/>
            <person name="Du H."/>
            <person name="Sun H."/>
            <person name="Edwards J."/>
            <person name="Bradshaw-Cordum H."/>
            <person name="Ali J."/>
            <person name="Andrews S."/>
            <person name="Isak A."/>
            <person name="Vanbrunt A."/>
            <person name="Nguyen C."/>
            <person name="Du F."/>
            <person name="Lamar B."/>
            <person name="Courtney L."/>
            <person name="Kalicki J."/>
            <person name="Ozersky P."/>
            <person name="Bielicki L."/>
            <person name="Scott K."/>
            <person name="Holmes A."/>
            <person name="Harkins R."/>
            <person name="Harris A."/>
            <person name="Strong C.M."/>
            <person name="Hou S."/>
            <person name="Tomlinson C."/>
            <person name="Dauphin-Kohlberg S."/>
            <person name="Kozlowicz-Reilly A."/>
            <person name="Leonard S."/>
            <person name="Rohlfing T."/>
            <person name="Rock S.M."/>
            <person name="Tin-Wollam A.-M."/>
            <person name="Abbott A."/>
            <person name="Minx P."/>
            <person name="Maupin R."/>
            <person name="Strowmatt C."/>
            <person name="Latreille P."/>
            <person name="Miller N."/>
            <person name="Johnson D."/>
            <person name="Murray J."/>
            <person name="Woessner J.P."/>
            <person name="Wendl M.C."/>
            <person name="Yang S.-P."/>
            <person name="Schultz B.R."/>
            <person name="Wallis J.W."/>
            <person name="Spieth J."/>
            <person name="Bieri T.A."/>
            <person name="Nelson J.O."/>
            <person name="Berkowicz N."/>
            <person name="Wohldmann P.E."/>
            <person name="Cook L.L."/>
            <person name="Hickenbotham M.T."/>
            <person name="Eldred J."/>
            <person name="Williams D."/>
            <person name="Bedell J.A."/>
            <person name="Mardis E.R."/>
            <person name="Clifton S.W."/>
            <person name="Chissoe S.L."/>
            <person name="Marra M.A."/>
            <person name="Raymond C."/>
            <person name="Haugen E."/>
            <person name="Gillett W."/>
            <person name="Zhou Y."/>
            <person name="James R."/>
            <person name="Phelps K."/>
            <person name="Iadanoto S."/>
            <person name="Bubb K."/>
            <person name="Simms E."/>
            <person name="Levy R."/>
            <person name="Clendenning J."/>
            <person name="Kaul R."/>
            <person name="Kent W.J."/>
            <person name="Furey T.S."/>
            <person name="Baertsch R.A."/>
            <person name="Brent M.R."/>
            <person name="Keibler E."/>
            <person name="Flicek P."/>
            <person name="Bork P."/>
            <person name="Suyama M."/>
            <person name="Bailey J.A."/>
            <person name="Portnoy M.E."/>
            <person name="Torrents D."/>
            <person name="Chinwalla A.T."/>
            <person name="Gish W.R."/>
            <person name="Eddy S.R."/>
            <person name="McPherson J.D."/>
            <person name="Olson M.V."/>
            <person name="Eichler E.E."/>
            <person name="Green E.D."/>
            <person name="Waterston R.H."/>
            <person name="Wilson R.K."/>
        </authorList>
    </citation>
    <scope>NUCLEOTIDE SEQUENCE [LARGE SCALE GENOMIC DNA]</scope>
</reference>
<reference key="3">
    <citation type="journal article" date="2003" name="Science">
        <title>Human chromosome 7: DNA sequence and biology.</title>
        <authorList>
            <person name="Scherer S.W."/>
            <person name="Cheung J."/>
            <person name="MacDonald J.R."/>
            <person name="Osborne L.R."/>
            <person name="Nakabayashi K."/>
            <person name="Herbrick J.-A."/>
            <person name="Carson A.R."/>
            <person name="Parker-Katiraee L."/>
            <person name="Skaug J."/>
            <person name="Khaja R."/>
            <person name="Zhang J."/>
            <person name="Hudek A.K."/>
            <person name="Li M."/>
            <person name="Haddad M."/>
            <person name="Duggan G.E."/>
            <person name="Fernandez B.A."/>
            <person name="Kanematsu E."/>
            <person name="Gentles S."/>
            <person name="Christopoulos C.C."/>
            <person name="Choufani S."/>
            <person name="Kwasnicka D."/>
            <person name="Zheng X.H."/>
            <person name="Lai Z."/>
            <person name="Nusskern D.R."/>
            <person name="Zhang Q."/>
            <person name="Gu Z."/>
            <person name="Lu F."/>
            <person name="Zeesman S."/>
            <person name="Nowaczyk M.J."/>
            <person name="Teshima I."/>
            <person name="Chitayat D."/>
            <person name="Shuman C."/>
            <person name="Weksberg R."/>
            <person name="Zackai E.H."/>
            <person name="Grebe T.A."/>
            <person name="Cox S.R."/>
            <person name="Kirkpatrick S.J."/>
            <person name="Rahman N."/>
            <person name="Friedman J.M."/>
            <person name="Heng H.H.Q."/>
            <person name="Pelicci P.G."/>
            <person name="Lo-Coco F."/>
            <person name="Belloni E."/>
            <person name="Shaffer L.G."/>
            <person name="Pober B."/>
            <person name="Morton C.C."/>
            <person name="Gusella J.F."/>
            <person name="Bruns G.A.P."/>
            <person name="Korf B.R."/>
            <person name="Quade B.J."/>
            <person name="Ligon A.H."/>
            <person name="Ferguson H."/>
            <person name="Higgins A.W."/>
            <person name="Leach N.T."/>
            <person name="Herrick S.R."/>
            <person name="Lemyre E."/>
            <person name="Farra C.G."/>
            <person name="Kim H.-G."/>
            <person name="Summers A.M."/>
            <person name="Gripp K.W."/>
            <person name="Roberts W."/>
            <person name="Szatmari P."/>
            <person name="Winsor E.J.T."/>
            <person name="Grzeschik K.-H."/>
            <person name="Teebi A."/>
            <person name="Minassian B.A."/>
            <person name="Kere J."/>
            <person name="Armengol L."/>
            <person name="Pujana M.A."/>
            <person name="Estivill X."/>
            <person name="Wilson M.D."/>
            <person name="Koop B.F."/>
            <person name="Tosi S."/>
            <person name="Moore G.E."/>
            <person name="Boright A.P."/>
            <person name="Zlotorynski E."/>
            <person name="Kerem B."/>
            <person name="Kroisel P.M."/>
            <person name="Petek E."/>
            <person name="Oscier D.G."/>
            <person name="Mould S.J."/>
            <person name="Doehner H."/>
            <person name="Doehner K."/>
            <person name="Rommens J.M."/>
            <person name="Vincent J.B."/>
            <person name="Venter J.C."/>
            <person name="Li P.W."/>
            <person name="Mural R.J."/>
            <person name="Adams M.D."/>
            <person name="Tsui L.-C."/>
        </authorList>
    </citation>
    <scope>NUCLEOTIDE SEQUENCE [LARGE SCALE GENOMIC DNA]</scope>
    <scope>VARIANT ILE-634</scope>
</reference>
<reference key="4">
    <citation type="journal article" date="2004" name="Genome Res.">
        <title>The status, quality, and expansion of the NIH full-length cDNA project: the Mammalian Gene Collection (MGC).</title>
        <authorList>
            <consortium name="The MGC Project Team"/>
        </authorList>
    </citation>
    <scope>NUCLEOTIDE SEQUENCE [LARGE SCALE MRNA]</scope>
</reference>
<reference key="5">
    <citation type="journal article" date="2004" name="Nat. Genet.">
        <title>Complete sequencing and characterization of 21,243 full-length human cDNAs.</title>
        <authorList>
            <person name="Ota T."/>
            <person name="Suzuki Y."/>
            <person name="Nishikawa T."/>
            <person name="Otsuki T."/>
            <person name="Sugiyama T."/>
            <person name="Irie R."/>
            <person name="Wakamatsu A."/>
            <person name="Hayashi K."/>
            <person name="Sato H."/>
            <person name="Nagai K."/>
            <person name="Kimura K."/>
            <person name="Makita H."/>
            <person name="Sekine M."/>
            <person name="Obayashi M."/>
            <person name="Nishi T."/>
            <person name="Shibahara T."/>
            <person name="Tanaka T."/>
            <person name="Ishii S."/>
            <person name="Yamamoto J."/>
            <person name="Saito K."/>
            <person name="Kawai Y."/>
            <person name="Isono Y."/>
            <person name="Nakamura Y."/>
            <person name="Nagahari K."/>
            <person name="Murakami K."/>
            <person name="Yasuda T."/>
            <person name="Iwayanagi T."/>
            <person name="Wagatsuma M."/>
            <person name="Shiratori A."/>
            <person name="Sudo H."/>
            <person name="Hosoiri T."/>
            <person name="Kaku Y."/>
            <person name="Kodaira H."/>
            <person name="Kondo H."/>
            <person name="Sugawara M."/>
            <person name="Takahashi M."/>
            <person name="Kanda K."/>
            <person name="Yokoi T."/>
            <person name="Furuya T."/>
            <person name="Kikkawa E."/>
            <person name="Omura Y."/>
            <person name="Abe K."/>
            <person name="Kamihara K."/>
            <person name="Katsuta N."/>
            <person name="Sato K."/>
            <person name="Tanikawa M."/>
            <person name="Yamazaki M."/>
            <person name="Ninomiya K."/>
            <person name="Ishibashi T."/>
            <person name="Yamashita H."/>
            <person name="Murakawa K."/>
            <person name="Fujimori K."/>
            <person name="Tanai H."/>
            <person name="Kimata M."/>
            <person name="Watanabe M."/>
            <person name="Hiraoka S."/>
            <person name="Chiba Y."/>
            <person name="Ishida S."/>
            <person name="Ono Y."/>
            <person name="Takiguchi S."/>
            <person name="Watanabe S."/>
            <person name="Yosida M."/>
            <person name="Hotuta T."/>
            <person name="Kusano J."/>
            <person name="Kanehori K."/>
            <person name="Takahashi-Fujii A."/>
            <person name="Hara H."/>
            <person name="Tanase T.-O."/>
            <person name="Nomura Y."/>
            <person name="Togiya S."/>
            <person name="Komai F."/>
            <person name="Hara R."/>
            <person name="Takeuchi K."/>
            <person name="Arita M."/>
            <person name="Imose N."/>
            <person name="Musashino K."/>
            <person name="Yuuki H."/>
            <person name="Oshima A."/>
            <person name="Sasaki N."/>
            <person name="Aotsuka S."/>
            <person name="Yoshikawa Y."/>
            <person name="Matsunawa H."/>
            <person name="Ichihara T."/>
            <person name="Shiohata N."/>
            <person name="Sano S."/>
            <person name="Moriya S."/>
            <person name="Momiyama H."/>
            <person name="Satoh N."/>
            <person name="Takami S."/>
            <person name="Terashima Y."/>
            <person name="Suzuki O."/>
            <person name="Nakagawa S."/>
            <person name="Senoh A."/>
            <person name="Mizoguchi H."/>
            <person name="Goto Y."/>
            <person name="Shimizu F."/>
            <person name="Wakebe H."/>
            <person name="Hishigaki H."/>
            <person name="Watanabe T."/>
            <person name="Sugiyama A."/>
            <person name="Takemoto M."/>
            <person name="Kawakami B."/>
            <person name="Yamazaki M."/>
            <person name="Watanabe K."/>
            <person name="Kumagai A."/>
            <person name="Itakura S."/>
            <person name="Fukuzumi Y."/>
            <person name="Fujimori Y."/>
            <person name="Komiyama M."/>
            <person name="Tashiro H."/>
            <person name="Tanigami A."/>
            <person name="Fujiwara T."/>
            <person name="Ono T."/>
            <person name="Yamada K."/>
            <person name="Fujii Y."/>
            <person name="Ozaki K."/>
            <person name="Hirao M."/>
            <person name="Ohmori Y."/>
            <person name="Kawabata A."/>
            <person name="Hikiji T."/>
            <person name="Kobatake N."/>
            <person name="Inagaki H."/>
            <person name="Ikema Y."/>
            <person name="Okamoto S."/>
            <person name="Okitani R."/>
            <person name="Kawakami T."/>
            <person name="Noguchi S."/>
            <person name="Itoh T."/>
            <person name="Shigeta K."/>
            <person name="Senba T."/>
            <person name="Matsumura K."/>
            <person name="Nakajima Y."/>
            <person name="Mizuno T."/>
            <person name="Morinaga M."/>
            <person name="Sasaki M."/>
            <person name="Togashi T."/>
            <person name="Oyama M."/>
            <person name="Hata H."/>
            <person name="Watanabe M."/>
            <person name="Komatsu T."/>
            <person name="Mizushima-Sugano J."/>
            <person name="Satoh T."/>
            <person name="Shirai Y."/>
            <person name="Takahashi Y."/>
            <person name="Nakagawa K."/>
            <person name="Okumura K."/>
            <person name="Nagase T."/>
            <person name="Nomura N."/>
            <person name="Kikuchi H."/>
            <person name="Masuho Y."/>
            <person name="Yamashita R."/>
            <person name="Nakai K."/>
            <person name="Yada T."/>
            <person name="Nakamura Y."/>
            <person name="Ohara O."/>
            <person name="Isogai T."/>
            <person name="Sugano S."/>
        </authorList>
    </citation>
    <scope>NUCLEOTIDE SEQUENCE [LARGE SCALE MRNA] OF 1-600</scope>
    <source>
        <tissue>Brain</tissue>
    </source>
</reference>
<reference key="6">
    <citation type="journal article" date="2010" name="Leg. Med.">
        <title>A Japanese-specific allele in the GALNT11 gene.</title>
        <authorList>
            <person name="Yuasa I."/>
            <person name="Umetsu K."/>
            <person name="Matsusue A."/>
            <person name="Nishimukai H."/>
            <person name="Harihara S."/>
            <person name="Fukumori Y."/>
            <person name="Saitou N."/>
            <person name="Jin F."/>
            <person name="Chattopadhyay P.K."/>
            <person name="Henke L."/>
            <person name="Henke J."/>
        </authorList>
    </citation>
    <scope>VARIANT TYR-248</scope>
</reference>
<dbReference type="EMBL" id="AY295769">
    <property type="protein sequence ID" value="AAP49447.1"/>
    <property type="molecule type" value="mRNA"/>
</dbReference>
<dbReference type="EMBL" id="AC002127">
    <property type="status" value="NOT_ANNOTATED_CDS"/>
    <property type="molecule type" value="Genomic_DNA"/>
</dbReference>
<dbReference type="EMBL" id="AC002382">
    <property type="status" value="NOT_ANNOTATED_CDS"/>
    <property type="molecule type" value="Genomic_DNA"/>
</dbReference>
<dbReference type="EMBL" id="AC006350">
    <property type="status" value="NOT_ANNOTATED_CDS"/>
    <property type="molecule type" value="Genomic_DNA"/>
</dbReference>
<dbReference type="EMBL" id="CH236949">
    <property type="protein sequence ID" value="EAL24168.1"/>
    <property type="molecule type" value="Genomic_DNA"/>
</dbReference>
<dbReference type="EMBL" id="BC140826">
    <property type="protein sequence ID" value="AAI40827.1"/>
    <property type="molecule type" value="mRNA"/>
</dbReference>
<dbReference type="EMBL" id="BC140829">
    <property type="protein sequence ID" value="AAI40830.1"/>
    <property type="molecule type" value="mRNA"/>
</dbReference>
<dbReference type="EMBL" id="AK056672">
    <property type="protein sequence ID" value="BAB71248.1"/>
    <property type="molecule type" value="mRNA"/>
</dbReference>
<dbReference type="CCDS" id="CCDS5613.1"/>
<dbReference type="RefSeq" id="NP_857597.1">
    <property type="nucleotide sequence ID" value="NM_181646.5"/>
</dbReference>
<dbReference type="SMR" id="A4D1E1"/>
<dbReference type="BioGRID" id="128555">
    <property type="interactions" value="4"/>
</dbReference>
<dbReference type="FunCoup" id="A4D1E1">
    <property type="interactions" value="709"/>
</dbReference>
<dbReference type="IntAct" id="A4D1E1">
    <property type="interactions" value="1"/>
</dbReference>
<dbReference type="STRING" id="9606.ENSP00000329638"/>
<dbReference type="GlyGen" id="A4D1E1">
    <property type="glycosylation" value="1 site, 1 O-linked glycan (1 site)"/>
</dbReference>
<dbReference type="iPTMnet" id="A4D1E1"/>
<dbReference type="PhosphoSitePlus" id="A4D1E1"/>
<dbReference type="BioMuta" id="ZNF804B"/>
<dbReference type="jPOST" id="A4D1E1"/>
<dbReference type="MassIVE" id="A4D1E1"/>
<dbReference type="PaxDb" id="9606-ENSP00000329638"/>
<dbReference type="PeptideAtlas" id="A4D1E1"/>
<dbReference type="ProteomicsDB" id="614"/>
<dbReference type="Antibodypedia" id="15392">
    <property type="antibodies" value="15 antibodies from 8 providers"/>
</dbReference>
<dbReference type="DNASU" id="219578"/>
<dbReference type="Ensembl" id="ENST00000333190.5">
    <property type="protein sequence ID" value="ENSP00000329638.4"/>
    <property type="gene ID" value="ENSG00000182348.7"/>
</dbReference>
<dbReference type="GeneID" id="219578"/>
<dbReference type="KEGG" id="hsa:219578"/>
<dbReference type="MANE-Select" id="ENST00000333190.5">
    <property type="protein sequence ID" value="ENSP00000329638.4"/>
    <property type="RefSeq nucleotide sequence ID" value="NM_181646.5"/>
    <property type="RefSeq protein sequence ID" value="NP_857597.1"/>
</dbReference>
<dbReference type="UCSC" id="uc011khi.3">
    <property type="organism name" value="human"/>
</dbReference>
<dbReference type="AGR" id="HGNC:21958"/>
<dbReference type="CTD" id="219578"/>
<dbReference type="DisGeNET" id="219578"/>
<dbReference type="GeneCards" id="ZNF804B"/>
<dbReference type="HGNC" id="HGNC:21958">
    <property type="gene designation" value="ZNF804B"/>
</dbReference>
<dbReference type="HPA" id="ENSG00000182348">
    <property type="expression patterns" value="Tissue enriched (thyroid)"/>
</dbReference>
<dbReference type="neXtProt" id="NX_A4D1E1"/>
<dbReference type="OpenTargets" id="ENSG00000182348"/>
<dbReference type="PharmGKB" id="PA162410600"/>
<dbReference type="VEuPathDB" id="HostDB:ENSG00000182348"/>
<dbReference type="eggNOG" id="ENOG502QS70">
    <property type="taxonomic scope" value="Eukaryota"/>
</dbReference>
<dbReference type="GeneTree" id="ENSGT00940000160479"/>
<dbReference type="HOGENOM" id="CLU_005858_0_0_1"/>
<dbReference type="InParanoid" id="A4D1E1"/>
<dbReference type="OMA" id="NRHQLQT"/>
<dbReference type="OrthoDB" id="4822at2759"/>
<dbReference type="PAN-GO" id="A4D1E1">
    <property type="GO annotations" value="1 GO annotation based on evolutionary models"/>
</dbReference>
<dbReference type="PhylomeDB" id="A4D1E1"/>
<dbReference type="TreeFam" id="TF332138"/>
<dbReference type="PathwayCommons" id="A4D1E1"/>
<dbReference type="Reactome" id="R-HSA-212436">
    <property type="pathway name" value="Generic Transcription Pathway"/>
</dbReference>
<dbReference type="SignaLink" id="A4D1E1"/>
<dbReference type="BioGRID-ORCS" id="219578">
    <property type="hits" value="6 hits in 1142 CRISPR screens"/>
</dbReference>
<dbReference type="ChiTaRS" id="ZNF804B">
    <property type="organism name" value="human"/>
</dbReference>
<dbReference type="GenomeRNAi" id="219578"/>
<dbReference type="Pharos" id="A4D1E1">
    <property type="development level" value="Tdark"/>
</dbReference>
<dbReference type="PRO" id="PR:A4D1E1"/>
<dbReference type="Proteomes" id="UP000005640">
    <property type="component" value="Chromosome 7"/>
</dbReference>
<dbReference type="RNAct" id="A4D1E1">
    <property type="molecule type" value="protein"/>
</dbReference>
<dbReference type="Bgee" id="ENSG00000182348">
    <property type="expression patterns" value="Expressed in male germ line stem cell (sensu Vertebrata) in testis and 15 other cell types or tissues"/>
</dbReference>
<dbReference type="ExpressionAtlas" id="A4D1E1">
    <property type="expression patterns" value="baseline and differential"/>
</dbReference>
<dbReference type="GO" id="GO:0005634">
    <property type="term" value="C:nucleus"/>
    <property type="evidence" value="ECO:0000318"/>
    <property type="project" value="GO_Central"/>
</dbReference>
<dbReference type="GO" id="GO:0008270">
    <property type="term" value="F:zinc ion binding"/>
    <property type="evidence" value="ECO:0007669"/>
    <property type="project" value="UniProtKB-KW"/>
</dbReference>
<dbReference type="InterPro" id="IPR052445">
    <property type="entry name" value="ZnF-G_patch_domain"/>
</dbReference>
<dbReference type="InterPro" id="IPR036236">
    <property type="entry name" value="Znf_C2H2_sf"/>
</dbReference>
<dbReference type="InterPro" id="IPR013087">
    <property type="entry name" value="Znf_C2H2_type"/>
</dbReference>
<dbReference type="PANTHER" id="PTHR17614:SF12">
    <property type="entry name" value="ZINC FINGER PROTEIN 804B"/>
    <property type="match status" value="1"/>
</dbReference>
<dbReference type="PANTHER" id="PTHR17614">
    <property type="entry name" value="ZINC FINGER-CONTAINING"/>
    <property type="match status" value="1"/>
</dbReference>
<dbReference type="SUPFAM" id="SSF57667">
    <property type="entry name" value="beta-beta-alpha zinc fingers"/>
    <property type="match status" value="1"/>
</dbReference>
<dbReference type="PROSITE" id="PS00028">
    <property type="entry name" value="ZINC_FINGER_C2H2_1"/>
    <property type="match status" value="1"/>
</dbReference>
<accession>A4D1E1</accession>
<accession>B2RTV2</accession>
<accession>Q7Z714</accession>
<accession>Q96MN7</accession>
<feature type="chain" id="PRO_0000289140" description="Zinc finger protein 804B">
    <location>
        <begin position="1"/>
        <end position="1349"/>
    </location>
</feature>
<feature type="zinc finger region" description="C2H2-type">
    <location>
        <begin position="55"/>
        <end position="79"/>
    </location>
</feature>
<feature type="region of interest" description="Disordered" evidence="1">
    <location>
        <begin position="985"/>
        <end position="1010"/>
    </location>
</feature>
<feature type="sequence variant" id="VAR_054666" description="In dbSNP:rs1916830." evidence="3">
    <original>C</original>
    <variation>Y</variation>
    <location>
        <position position="248"/>
    </location>
</feature>
<feature type="sequence variant" id="VAR_059938" description="In dbSNP:rs801840." evidence="2">
    <original>F</original>
    <variation>I</variation>
    <location>
        <position position="634"/>
    </location>
</feature>
<feature type="sequence variant" id="VAR_054667" description="In dbSNP:rs10487075.">
    <original>E</original>
    <variation>K</variation>
    <location>
        <position position="909"/>
    </location>
</feature>
<feature type="sequence variant" id="VAR_061968" description="In dbSNP:rs59859857.">
    <original>N</original>
    <variation>H</variation>
    <location>
        <position position="914"/>
    </location>
</feature>
<feature type="sequence variant" id="VAR_061969" description="In dbSNP:rs56948780.">
    <original>T</original>
    <variation>I</variation>
    <location>
        <position position="915"/>
    </location>
</feature>
<feature type="sequence variant" id="VAR_054668" description="In dbSNP:rs6963781.">
    <original>M</original>
    <variation>V</variation>
    <location>
        <position position="1105"/>
    </location>
</feature>
<feature type="sequence variant" id="VAR_054669" description="In dbSNP:rs801841.">
    <original>V</original>
    <variation>I</variation>
    <location>
        <position position="1195"/>
    </location>
</feature>
<feature type="sequence conflict" description="In Ref. 5; BAB71248." evidence="4" ref="5">
    <original>K</original>
    <variation>E</variation>
    <location>
        <position position="144"/>
    </location>
</feature>
<name>Z804B_HUMAN</name>